<gene>
    <name type="primary">FCPB</name>
</gene>
<evidence type="ECO:0000255" key="1"/>
<evidence type="ECO:0000305" key="2"/>
<protein>
    <recommendedName>
        <fullName>Fucoxanthin-chlorophyll a-c binding protein B, chloroplastic</fullName>
    </recommendedName>
</protein>
<keyword id="KW-0148">Chlorophyll</keyword>
<keyword id="KW-0150">Chloroplast</keyword>
<keyword id="KW-0157">Chromophore</keyword>
<keyword id="KW-0437">Light-harvesting polypeptide</keyword>
<keyword id="KW-0472">Membrane</keyword>
<keyword id="KW-0602">Photosynthesis</keyword>
<keyword id="KW-0604">Photosystem II</keyword>
<keyword id="KW-0934">Plastid</keyword>
<keyword id="KW-0793">Thylakoid</keyword>
<keyword id="KW-0809">Transit peptide</keyword>
<keyword id="KW-0812">Transmembrane</keyword>
<keyword id="KW-1133">Transmembrane helix</keyword>
<sequence>MKFTVFASLFASAAAFAPAQQAARTSVATNMAFESELGAQAPLGFYDPLGLVADGDQEKFDRLRYVEIKHGRISMLAVAGYLAQEAGWRLGGDIALDGTKFADIPNGFAALSAIPQAGLIQIIAFIGFLETSVMKDITGGEFVGDFRNGYIDFGWDSFDQETKLRKRAIELNQGRAAQMGILALMVHEQLGVNILPGV</sequence>
<reference key="1">
    <citation type="journal article" date="1993" name="Nucleic Acids Res.">
        <title>Characterization of gene clusters encoding the fucoxanthin chlorophyll proteins of the diatom Phaeodactylum tricornutum.</title>
        <authorList>
            <person name="Bhaya D."/>
            <person name="Grossman A.R."/>
        </authorList>
    </citation>
    <scope>NUCLEOTIDE SEQUENCE [GENOMIC DNA]</scope>
    <source>
        <strain>UTEX 646 / Bohlin</strain>
    </source>
</reference>
<feature type="transit peptide" description="Chloroplast" evidence="2">
    <location>
        <begin position="1"/>
        <end position="31"/>
    </location>
</feature>
<feature type="chain" id="PRO_0000021236" description="Fucoxanthin-chlorophyll a-c binding protein B, chloroplastic">
    <location>
        <begin position="32"/>
        <end position="198"/>
    </location>
</feature>
<feature type="transmembrane region" description="Helical" evidence="1">
    <location>
        <begin position="73"/>
        <end position="94"/>
    </location>
</feature>
<feature type="transmembrane region" description="Helical" evidence="1">
    <location>
        <begin position="114"/>
        <end position="134"/>
    </location>
</feature>
<feature type="transmembrane region" description="Helical" evidence="1">
    <location>
        <begin position="174"/>
        <end position="196"/>
    </location>
</feature>
<accession>Q08585</accession>
<dbReference type="EMBL" id="Z24768">
    <property type="protein sequence ID" value="CAA80897.1"/>
    <property type="molecule type" value="Genomic_DNA"/>
</dbReference>
<dbReference type="PIR" id="S42134">
    <property type="entry name" value="S42134"/>
</dbReference>
<dbReference type="SMR" id="Q08585"/>
<dbReference type="EnsemblProtists" id="Phatr3_J25172.t1">
    <property type="protein sequence ID" value="Phatr3_J25172.p1"/>
    <property type="gene ID" value="Phatr3_J25172"/>
</dbReference>
<dbReference type="HOGENOM" id="CLU_057943_4_1_1"/>
<dbReference type="OMA" id="NDGWEPE"/>
<dbReference type="GO" id="GO:0009535">
    <property type="term" value="C:chloroplast thylakoid membrane"/>
    <property type="evidence" value="ECO:0007669"/>
    <property type="project" value="UniProtKB-SubCell"/>
</dbReference>
<dbReference type="GO" id="GO:0030076">
    <property type="term" value="C:light-harvesting complex"/>
    <property type="evidence" value="ECO:0007669"/>
    <property type="project" value="UniProtKB-KW"/>
</dbReference>
<dbReference type="GO" id="GO:0009523">
    <property type="term" value="C:photosystem II"/>
    <property type="evidence" value="ECO:0007669"/>
    <property type="project" value="UniProtKB-KW"/>
</dbReference>
<dbReference type="GO" id="GO:0016168">
    <property type="term" value="F:chlorophyll binding"/>
    <property type="evidence" value="ECO:0007669"/>
    <property type="project" value="UniProtKB-KW"/>
</dbReference>
<dbReference type="GO" id="GO:0009765">
    <property type="term" value="P:photosynthesis, light harvesting"/>
    <property type="evidence" value="ECO:0007669"/>
    <property type="project" value="InterPro"/>
</dbReference>
<dbReference type="FunFam" id="1.10.3460.10:FF:000011">
    <property type="entry name" value="Fucoxanthin chlorophyll a/c protein 8"/>
    <property type="match status" value="1"/>
</dbReference>
<dbReference type="Gene3D" id="1.10.3460.10">
    <property type="entry name" value="Chlorophyll a/b binding protein domain"/>
    <property type="match status" value="1"/>
</dbReference>
<dbReference type="InterPro" id="IPR001344">
    <property type="entry name" value="Chloro_AB-bd_pln"/>
</dbReference>
<dbReference type="InterPro" id="IPR022796">
    <property type="entry name" value="Chloroa_b-bind"/>
</dbReference>
<dbReference type="PANTHER" id="PTHR21649">
    <property type="entry name" value="CHLOROPHYLL A/B BINDING PROTEIN"/>
    <property type="match status" value="1"/>
</dbReference>
<dbReference type="Pfam" id="PF00504">
    <property type="entry name" value="Chloroa_b-bind"/>
    <property type="match status" value="1"/>
</dbReference>
<dbReference type="SUPFAM" id="SSF103511">
    <property type="entry name" value="Chlorophyll a-b binding protein"/>
    <property type="match status" value="1"/>
</dbReference>
<proteinExistence type="inferred from homology"/>
<comment type="function">
    <text>The light-harvesting complex (LHC) functions as a light receptor, it captures and delivers excitation energy to photosystems with which it is closely associated. Energy is transferred from the carotenoid and chlorophyll C (or B) to chlorophyll A and the photosynthetic reaction centers where it is used to synthesize ATP and reducing power.</text>
</comment>
<comment type="subunit">
    <text>The LHC complex of chromophytic algae is composed of fucoxanthin, chlorophyll A and C bound non-covalently by fucoxanthin chlorophyll proteins (FCPs). The ratio of the pigments in LHC; fucoxanthin: chlorophyll C: chlorophyll A; (0.6-1): (0.1-0.3): (1).</text>
</comment>
<comment type="subcellular location">
    <subcellularLocation>
        <location>Plastid</location>
        <location>Chloroplast thylakoid membrane</location>
        <topology>Multi-pass membrane protein</topology>
    </subcellularLocation>
    <text>FCPs are probably transported across the endoplasmic reticulum membranes that surround the plastid via a signal peptide, followed by translocation across the thylakoid membrane via a transit peptide.</text>
</comment>
<comment type="similarity">
    <text evidence="2">Belongs to the fucoxanthin chlorophyll protein family.</text>
</comment>
<organism>
    <name type="scientific">Phaeodactylum tricornutum</name>
    <name type="common">Diatom</name>
    <dbReference type="NCBI Taxonomy" id="2850"/>
    <lineage>
        <taxon>Eukaryota</taxon>
        <taxon>Sar</taxon>
        <taxon>Stramenopiles</taxon>
        <taxon>Ochrophyta</taxon>
        <taxon>Bacillariophyta</taxon>
        <taxon>Bacillariophyceae</taxon>
        <taxon>Bacillariophycidae</taxon>
        <taxon>Naviculales</taxon>
        <taxon>Phaeodactylaceae</taxon>
        <taxon>Phaeodactylum</taxon>
    </lineage>
</organism>
<name>FCPB_PHATR</name>